<evidence type="ECO:0000255" key="1">
    <source>
        <dbReference type="HAMAP-Rule" id="MF_00227"/>
    </source>
</evidence>
<gene>
    <name evidence="1" type="primary">rnpA</name>
    <name type="ordered locus">Swol_2576</name>
</gene>
<sequence>MLDKKARIRTSREYRNVFEKGKRLSGRFLIIYYVENALDNNRFGFITNKKIGMAVIRNRIKRQLRAIVREYQGQVKNKHDIVLVARAGIGKSSFEGMEKDYIAIMKKAGLFARNANKID</sequence>
<protein>
    <recommendedName>
        <fullName evidence="1">Ribonuclease P protein component</fullName>
        <shortName evidence="1">RNase P protein</shortName>
        <shortName evidence="1">RNaseP protein</shortName>
        <ecNumber evidence="1">3.1.26.5</ecNumber>
    </recommendedName>
    <alternativeName>
        <fullName evidence="1">Protein C5</fullName>
    </alternativeName>
</protein>
<accession>Q0ATU2</accession>
<feature type="chain" id="PRO_1000021486" description="Ribonuclease P protein component">
    <location>
        <begin position="1"/>
        <end position="119"/>
    </location>
</feature>
<organism>
    <name type="scientific">Syntrophomonas wolfei subsp. wolfei (strain DSM 2245B / Goettingen)</name>
    <dbReference type="NCBI Taxonomy" id="335541"/>
    <lineage>
        <taxon>Bacteria</taxon>
        <taxon>Bacillati</taxon>
        <taxon>Bacillota</taxon>
        <taxon>Clostridia</taxon>
        <taxon>Eubacteriales</taxon>
        <taxon>Syntrophomonadaceae</taxon>
        <taxon>Syntrophomonas</taxon>
    </lineage>
</organism>
<reference key="1">
    <citation type="journal article" date="2010" name="Environ. Microbiol.">
        <title>The genome of Syntrophomonas wolfei: new insights into syntrophic metabolism and biohydrogen production.</title>
        <authorList>
            <person name="Sieber J.R."/>
            <person name="Sims D.R."/>
            <person name="Han C."/>
            <person name="Kim E."/>
            <person name="Lykidis A."/>
            <person name="Lapidus A.L."/>
            <person name="McDonnald E."/>
            <person name="Rohlin L."/>
            <person name="Culley D.E."/>
            <person name="Gunsalus R."/>
            <person name="McInerney M.J."/>
        </authorList>
    </citation>
    <scope>NUCLEOTIDE SEQUENCE [LARGE SCALE GENOMIC DNA]</scope>
    <source>
        <strain>DSM 2245B / Goettingen</strain>
    </source>
</reference>
<proteinExistence type="inferred from homology"/>
<keyword id="KW-0255">Endonuclease</keyword>
<keyword id="KW-0378">Hydrolase</keyword>
<keyword id="KW-0540">Nuclease</keyword>
<keyword id="KW-1185">Reference proteome</keyword>
<keyword id="KW-0694">RNA-binding</keyword>
<keyword id="KW-0819">tRNA processing</keyword>
<dbReference type="EC" id="3.1.26.5" evidence="1"/>
<dbReference type="EMBL" id="CP000448">
    <property type="protein sequence ID" value="ABI69862.1"/>
    <property type="molecule type" value="Genomic_DNA"/>
</dbReference>
<dbReference type="RefSeq" id="WP_011641942.1">
    <property type="nucleotide sequence ID" value="NC_008346.1"/>
</dbReference>
<dbReference type="SMR" id="Q0ATU2"/>
<dbReference type="STRING" id="335541.Swol_2576"/>
<dbReference type="KEGG" id="swo:Swol_2576"/>
<dbReference type="eggNOG" id="COG0594">
    <property type="taxonomic scope" value="Bacteria"/>
</dbReference>
<dbReference type="HOGENOM" id="CLU_117179_9_1_9"/>
<dbReference type="OrthoDB" id="9810867at2"/>
<dbReference type="Proteomes" id="UP000001968">
    <property type="component" value="Chromosome"/>
</dbReference>
<dbReference type="GO" id="GO:0030677">
    <property type="term" value="C:ribonuclease P complex"/>
    <property type="evidence" value="ECO:0007669"/>
    <property type="project" value="TreeGrafter"/>
</dbReference>
<dbReference type="GO" id="GO:0042781">
    <property type="term" value="F:3'-tRNA processing endoribonuclease activity"/>
    <property type="evidence" value="ECO:0007669"/>
    <property type="project" value="TreeGrafter"/>
</dbReference>
<dbReference type="GO" id="GO:0004526">
    <property type="term" value="F:ribonuclease P activity"/>
    <property type="evidence" value="ECO:0007669"/>
    <property type="project" value="UniProtKB-UniRule"/>
</dbReference>
<dbReference type="GO" id="GO:0000049">
    <property type="term" value="F:tRNA binding"/>
    <property type="evidence" value="ECO:0007669"/>
    <property type="project" value="UniProtKB-UniRule"/>
</dbReference>
<dbReference type="GO" id="GO:0001682">
    <property type="term" value="P:tRNA 5'-leader removal"/>
    <property type="evidence" value="ECO:0007669"/>
    <property type="project" value="UniProtKB-UniRule"/>
</dbReference>
<dbReference type="Gene3D" id="3.30.230.10">
    <property type="match status" value="1"/>
</dbReference>
<dbReference type="HAMAP" id="MF_00227">
    <property type="entry name" value="RNase_P"/>
    <property type="match status" value="1"/>
</dbReference>
<dbReference type="InterPro" id="IPR020568">
    <property type="entry name" value="Ribosomal_Su5_D2-typ_SF"/>
</dbReference>
<dbReference type="InterPro" id="IPR014721">
    <property type="entry name" value="Ribsml_uS5_D2-typ_fold_subgr"/>
</dbReference>
<dbReference type="InterPro" id="IPR000100">
    <property type="entry name" value="RNase_P"/>
</dbReference>
<dbReference type="InterPro" id="IPR020539">
    <property type="entry name" value="RNase_P_CS"/>
</dbReference>
<dbReference type="NCBIfam" id="TIGR00188">
    <property type="entry name" value="rnpA"/>
    <property type="match status" value="1"/>
</dbReference>
<dbReference type="PANTHER" id="PTHR33992">
    <property type="entry name" value="RIBONUCLEASE P PROTEIN COMPONENT"/>
    <property type="match status" value="1"/>
</dbReference>
<dbReference type="PANTHER" id="PTHR33992:SF1">
    <property type="entry name" value="RIBONUCLEASE P PROTEIN COMPONENT"/>
    <property type="match status" value="1"/>
</dbReference>
<dbReference type="Pfam" id="PF00825">
    <property type="entry name" value="Ribonuclease_P"/>
    <property type="match status" value="1"/>
</dbReference>
<dbReference type="SUPFAM" id="SSF54211">
    <property type="entry name" value="Ribosomal protein S5 domain 2-like"/>
    <property type="match status" value="1"/>
</dbReference>
<dbReference type="PROSITE" id="PS00648">
    <property type="entry name" value="RIBONUCLEASE_P"/>
    <property type="match status" value="1"/>
</dbReference>
<name>RNPA_SYNWW</name>
<comment type="function">
    <text evidence="1">RNaseP catalyzes the removal of the 5'-leader sequence from pre-tRNA to produce the mature 5'-terminus. It can also cleave other RNA substrates such as 4.5S RNA. The protein component plays an auxiliary but essential role in vivo by binding to the 5'-leader sequence and broadening the substrate specificity of the ribozyme.</text>
</comment>
<comment type="catalytic activity">
    <reaction evidence="1">
        <text>Endonucleolytic cleavage of RNA, removing 5'-extranucleotides from tRNA precursor.</text>
        <dbReference type="EC" id="3.1.26.5"/>
    </reaction>
</comment>
<comment type="subunit">
    <text evidence="1">Consists of a catalytic RNA component (M1 or rnpB) and a protein subunit.</text>
</comment>
<comment type="similarity">
    <text evidence="1">Belongs to the RnpA family.</text>
</comment>